<accession>Q18K21</accession>
<feature type="chain" id="PRO_0000300743" description="Signal recognition particle 19 kDa protein">
    <location>
        <begin position="1"/>
        <end position="93"/>
    </location>
</feature>
<organism>
    <name type="scientific">Haloquadratum walsbyi (strain DSM 16790 / HBSQ001)</name>
    <dbReference type="NCBI Taxonomy" id="362976"/>
    <lineage>
        <taxon>Archaea</taxon>
        <taxon>Methanobacteriati</taxon>
        <taxon>Methanobacteriota</taxon>
        <taxon>Stenosarchaea group</taxon>
        <taxon>Halobacteria</taxon>
        <taxon>Halobacteriales</taxon>
        <taxon>Haloferacaceae</taxon>
        <taxon>Haloquadratum</taxon>
    </lineage>
</organism>
<proteinExistence type="inferred from homology"/>
<comment type="function">
    <text evidence="1">Involved in targeting and insertion of nascent membrane proteins into the cytoplasmic membrane. Binds directly to 7S RNA and mediates binding of the 54 kDa subunit of the SRP.</text>
</comment>
<comment type="subunit">
    <text evidence="1">Part of the signal recognition particle protein translocation system, which is composed of SRP and FtsY. Archaeal SRP consists of a 7S RNA molecule of 300 nucleotides and two protein subunits: SRP54 and SRP19.</text>
</comment>
<comment type="subcellular location">
    <subcellularLocation>
        <location evidence="1">Cytoplasm</location>
    </subcellularLocation>
</comment>
<comment type="similarity">
    <text evidence="1">Belongs to the SRP19 family.</text>
</comment>
<name>SRP19_HALWD</name>
<reference key="1">
    <citation type="journal article" date="2006" name="BMC Genomics">
        <title>The genome of the square archaeon Haloquadratum walsbyi: life at the limits of water activity.</title>
        <authorList>
            <person name="Bolhuis H."/>
            <person name="Palm P."/>
            <person name="Wende A."/>
            <person name="Falb M."/>
            <person name="Rampp M."/>
            <person name="Rodriguez-Valera F."/>
            <person name="Pfeiffer F."/>
            <person name="Oesterhelt D."/>
        </authorList>
    </citation>
    <scope>NUCLEOTIDE SEQUENCE [LARGE SCALE GENOMIC DNA]</scope>
    <source>
        <strain>DSM 16790 / HBSQ001</strain>
    </source>
</reference>
<gene>
    <name evidence="1" type="primary">srp19</name>
    <name type="ordered locus">HQ_1503A</name>
</gene>
<evidence type="ECO:0000255" key="1">
    <source>
        <dbReference type="HAMAP-Rule" id="MF_00305"/>
    </source>
</evidence>
<sequence>MAVENIVWPRYLDASITRSDGRRVSLQDAIEDPEVDEIAEAVQQIGYDAVIEHDVAHPREWGTSGRVIVKGADDSSKNDLVQAVAAYIHLLRE</sequence>
<keyword id="KW-0963">Cytoplasm</keyword>
<keyword id="KW-1185">Reference proteome</keyword>
<keyword id="KW-0687">Ribonucleoprotein</keyword>
<keyword id="KW-0694">RNA-binding</keyword>
<keyword id="KW-0733">Signal recognition particle</keyword>
<dbReference type="EMBL" id="AM180088">
    <property type="protein sequence ID" value="CAJ51631.1"/>
    <property type="molecule type" value="Genomic_DNA"/>
</dbReference>
<dbReference type="RefSeq" id="WP_011570785.1">
    <property type="nucleotide sequence ID" value="NC_008212.1"/>
</dbReference>
<dbReference type="SMR" id="Q18K21"/>
<dbReference type="STRING" id="362976.HQ_1503A"/>
<dbReference type="GeneID" id="4194713"/>
<dbReference type="KEGG" id="hwa:HQ_1503A"/>
<dbReference type="eggNOG" id="arCOG01217">
    <property type="taxonomic scope" value="Archaea"/>
</dbReference>
<dbReference type="HOGENOM" id="CLU_169299_1_0_2"/>
<dbReference type="Proteomes" id="UP000001975">
    <property type="component" value="Chromosome"/>
</dbReference>
<dbReference type="GO" id="GO:0048500">
    <property type="term" value="C:signal recognition particle"/>
    <property type="evidence" value="ECO:0007669"/>
    <property type="project" value="UniProtKB-UniRule"/>
</dbReference>
<dbReference type="GO" id="GO:0008312">
    <property type="term" value="F:7S RNA binding"/>
    <property type="evidence" value="ECO:0007669"/>
    <property type="project" value="UniProtKB-UniRule"/>
</dbReference>
<dbReference type="GO" id="GO:0006617">
    <property type="term" value="P:SRP-dependent cotranslational protein targeting to membrane, signal sequence recognition"/>
    <property type="evidence" value="ECO:0007669"/>
    <property type="project" value="TreeGrafter"/>
</dbReference>
<dbReference type="Gene3D" id="3.30.56.30">
    <property type="entry name" value="Signal recognition particle, SRP19-like subunit"/>
    <property type="match status" value="1"/>
</dbReference>
<dbReference type="HAMAP" id="MF_00305">
    <property type="entry name" value="SRP19"/>
    <property type="match status" value="1"/>
</dbReference>
<dbReference type="InterPro" id="IPR002778">
    <property type="entry name" value="Signal_recog_particle_SRP19"/>
</dbReference>
<dbReference type="InterPro" id="IPR053394">
    <property type="entry name" value="SRP19"/>
</dbReference>
<dbReference type="InterPro" id="IPR036521">
    <property type="entry name" value="SRP19-like_sf"/>
</dbReference>
<dbReference type="InterPro" id="IPR022938">
    <property type="entry name" value="SRP19_arc-type"/>
</dbReference>
<dbReference type="NCBIfam" id="NF041311">
    <property type="entry name" value="Sig_rec_Srp19_Halo"/>
    <property type="match status" value="1"/>
</dbReference>
<dbReference type="PANTHER" id="PTHR17453">
    <property type="entry name" value="SIGNAL RECOGNITION PARTICLE 19 KD PROTEIN"/>
    <property type="match status" value="1"/>
</dbReference>
<dbReference type="PANTHER" id="PTHR17453:SF0">
    <property type="entry name" value="SIGNAL RECOGNITION PARTICLE 19 KDA PROTEIN"/>
    <property type="match status" value="1"/>
</dbReference>
<dbReference type="Pfam" id="PF01922">
    <property type="entry name" value="SRP19"/>
    <property type="match status" value="1"/>
</dbReference>
<dbReference type="SUPFAM" id="SSF69695">
    <property type="entry name" value="SRP19"/>
    <property type="match status" value="1"/>
</dbReference>
<protein>
    <recommendedName>
        <fullName evidence="1">Signal recognition particle 19 kDa protein</fullName>
        <shortName evidence="1">SRP19</shortName>
    </recommendedName>
</protein>